<dbReference type="EC" id="3.1.11.6" evidence="1"/>
<dbReference type="EMBL" id="CP000725">
    <property type="protein sequence ID" value="ABV09895.1"/>
    <property type="molecule type" value="Genomic_DNA"/>
</dbReference>
<dbReference type="RefSeq" id="WP_012000165.1">
    <property type="nucleotide sequence ID" value="NC_009785.1"/>
</dbReference>
<dbReference type="SMR" id="A8AW35"/>
<dbReference type="STRING" id="467705.SGO_0693"/>
<dbReference type="KEGG" id="sgo:SGO_0693"/>
<dbReference type="eggNOG" id="COG1570">
    <property type="taxonomic scope" value="Bacteria"/>
</dbReference>
<dbReference type="HOGENOM" id="CLU_023625_3_1_9"/>
<dbReference type="Proteomes" id="UP000001131">
    <property type="component" value="Chromosome"/>
</dbReference>
<dbReference type="GO" id="GO:0005737">
    <property type="term" value="C:cytoplasm"/>
    <property type="evidence" value="ECO:0007669"/>
    <property type="project" value="UniProtKB-SubCell"/>
</dbReference>
<dbReference type="GO" id="GO:0009318">
    <property type="term" value="C:exodeoxyribonuclease VII complex"/>
    <property type="evidence" value="ECO:0007669"/>
    <property type="project" value="InterPro"/>
</dbReference>
<dbReference type="GO" id="GO:0008855">
    <property type="term" value="F:exodeoxyribonuclease VII activity"/>
    <property type="evidence" value="ECO:0007669"/>
    <property type="project" value="UniProtKB-UniRule"/>
</dbReference>
<dbReference type="GO" id="GO:0003676">
    <property type="term" value="F:nucleic acid binding"/>
    <property type="evidence" value="ECO:0007669"/>
    <property type="project" value="InterPro"/>
</dbReference>
<dbReference type="GO" id="GO:0006308">
    <property type="term" value="P:DNA catabolic process"/>
    <property type="evidence" value="ECO:0007669"/>
    <property type="project" value="UniProtKB-UniRule"/>
</dbReference>
<dbReference type="CDD" id="cd04489">
    <property type="entry name" value="ExoVII_LU_OBF"/>
    <property type="match status" value="1"/>
</dbReference>
<dbReference type="HAMAP" id="MF_00378">
    <property type="entry name" value="Exonuc_7_L"/>
    <property type="match status" value="1"/>
</dbReference>
<dbReference type="InterPro" id="IPR003753">
    <property type="entry name" value="Exonuc_VII_L"/>
</dbReference>
<dbReference type="InterPro" id="IPR020579">
    <property type="entry name" value="Exonuc_VII_lsu_C"/>
</dbReference>
<dbReference type="InterPro" id="IPR025824">
    <property type="entry name" value="OB-fold_nuc-bd_dom"/>
</dbReference>
<dbReference type="NCBIfam" id="TIGR00237">
    <property type="entry name" value="xseA"/>
    <property type="match status" value="1"/>
</dbReference>
<dbReference type="PANTHER" id="PTHR30008">
    <property type="entry name" value="EXODEOXYRIBONUCLEASE 7 LARGE SUBUNIT"/>
    <property type="match status" value="1"/>
</dbReference>
<dbReference type="PANTHER" id="PTHR30008:SF0">
    <property type="entry name" value="EXODEOXYRIBONUCLEASE 7 LARGE SUBUNIT"/>
    <property type="match status" value="1"/>
</dbReference>
<dbReference type="Pfam" id="PF02601">
    <property type="entry name" value="Exonuc_VII_L"/>
    <property type="match status" value="1"/>
</dbReference>
<dbReference type="Pfam" id="PF13742">
    <property type="entry name" value="tRNA_anti_2"/>
    <property type="match status" value="1"/>
</dbReference>
<organism>
    <name type="scientific">Streptococcus gordonii (strain Challis / ATCC 35105 / BCRC 15272 / CH1 / DL1 / V288)</name>
    <dbReference type="NCBI Taxonomy" id="467705"/>
    <lineage>
        <taxon>Bacteria</taxon>
        <taxon>Bacillati</taxon>
        <taxon>Bacillota</taxon>
        <taxon>Bacilli</taxon>
        <taxon>Lactobacillales</taxon>
        <taxon>Streptococcaceae</taxon>
        <taxon>Streptococcus</taxon>
    </lineage>
</organism>
<proteinExistence type="inferred from homology"/>
<name>EX7L_STRGC</name>
<evidence type="ECO:0000255" key="1">
    <source>
        <dbReference type="HAMAP-Rule" id="MF_00378"/>
    </source>
</evidence>
<protein>
    <recommendedName>
        <fullName evidence="1">Exodeoxyribonuclease 7 large subunit</fullName>
        <ecNumber evidence="1">3.1.11.6</ecNumber>
    </recommendedName>
    <alternativeName>
        <fullName evidence="1">Exodeoxyribonuclease VII large subunit</fullName>
        <shortName evidence="1">Exonuclease VII large subunit</shortName>
    </alternativeName>
</protein>
<accession>A8AW35</accession>
<reference key="1">
    <citation type="journal article" date="2007" name="J. Bacteriol.">
        <title>Genome-wide transcriptional changes in Streptococcus gordonii in response to competence signaling peptide.</title>
        <authorList>
            <person name="Vickerman M.M."/>
            <person name="Iobst S."/>
            <person name="Jesionowski A.M."/>
            <person name="Gill S.R."/>
        </authorList>
    </citation>
    <scope>NUCLEOTIDE SEQUENCE [LARGE SCALE GENOMIC DNA]</scope>
    <source>
        <strain>Challis / ATCC 35105 / BCRC 15272 / CH1 / DL1 / V288</strain>
    </source>
</reference>
<sequence length="446" mass="51033">MPEYLSVSTLTKYLKMKFERDPYLERVYLTGQVSNFRRRPNHQYFSLKDEKAVIQVTIWSGVYQKLGFELEEGMKINVIGRVQLYEPSGSYSIIIEKAEPDGIGALAIQFEQLKKKLGEEGLFQDKFKQSLPQFPKKIGVVTSPSGAVIRDIITTVSRRFPGVEIVLYPTKVQGDGAAAQIADHIRLANERSDLDVLIIGRGGGSIEDLWAFNEEETVRAIFESRIPVISSVGHETDTTLADFAADRRAATPTAAAELATPVTKLDLLGHLQQQENRMSRAISNRLSYYRERLNKLTQSVIFRQPERLYDGHLQKLDQLNLRLKQKIREYYSEEKQRVKILQHRLEALNPHSRVQRLQEQTAQLERLLRSNMAVIYDNKVAQVRRLSEALLMLDTSRIVARGYAIVQKNQKVIESSAGIEEKDELTLLMRDGQLEVEVKHVQRKEI</sequence>
<feature type="chain" id="PRO_1000079998" description="Exodeoxyribonuclease 7 large subunit">
    <location>
        <begin position="1"/>
        <end position="446"/>
    </location>
</feature>
<comment type="function">
    <text evidence="1">Bidirectionally degrades single-stranded DNA into large acid-insoluble oligonucleotides, which are then degraded further into small acid-soluble oligonucleotides.</text>
</comment>
<comment type="catalytic activity">
    <reaction evidence="1">
        <text>Exonucleolytic cleavage in either 5'- to 3'- or 3'- to 5'-direction to yield nucleoside 5'-phosphates.</text>
        <dbReference type="EC" id="3.1.11.6"/>
    </reaction>
</comment>
<comment type="subunit">
    <text evidence="1">Heterooligomer composed of large and small subunits.</text>
</comment>
<comment type="subcellular location">
    <subcellularLocation>
        <location evidence="1">Cytoplasm</location>
    </subcellularLocation>
</comment>
<comment type="similarity">
    <text evidence="1">Belongs to the XseA family.</text>
</comment>
<keyword id="KW-0963">Cytoplasm</keyword>
<keyword id="KW-0269">Exonuclease</keyword>
<keyword id="KW-0378">Hydrolase</keyword>
<keyword id="KW-0540">Nuclease</keyword>
<keyword id="KW-1185">Reference proteome</keyword>
<gene>
    <name evidence="1" type="primary">xseA</name>
    <name type="ordered locus">SGO_0693</name>
</gene>